<keyword id="KW-0378">Hydrolase</keyword>
<keyword id="KW-0614">Plasmid</keyword>
<keyword id="KW-0645">Protease</keyword>
<keyword id="KW-0964">Secreted</keyword>
<keyword id="KW-0788">Thiol protease</keyword>
<keyword id="KW-0843">Virulence</keyword>
<name>YOPT1_YEREN</name>
<evidence type="ECO:0000250" key="1"/>
<evidence type="ECO:0000269" key="2">
    <source>
    </source>
</evidence>
<evidence type="ECO:0000269" key="3">
    <source>
    </source>
</evidence>
<evidence type="ECO:0000305" key="4"/>
<sequence>MDSIHGHYHIQLSNYSAGENLQSATLTEGVIGAHRVKVETALSHSNRQKKLSATIKHNQSSRSMLDRKLTSDGKVNQRSSFTFSMIMYRMIHFVLSTRVPAVRESVANYGGNINFKFAQTKGAFLHQIIKHSDTARGACEALCAHWIRSHAQGQSLFDQLYVGGRKGKFQIDTLYSIKQLQIDGCKADVDQDEVTLDWLKKNGISERMIERHCLLPTVDVTGTTGSEGPDQLLNAILDTHGIGYGYKKIYLSGQMSGHTIAAYVNENSGVTFFDPNFGEFHFSDKEQFSKWFTNSFWENSMYHYPLGVGQSFSVFTFDSKEV</sequence>
<gene>
    <name type="primary">yopT1</name>
</gene>
<dbReference type="EC" id="3.4.22.-"/>
<dbReference type="EMBL" id="AY150843">
    <property type="protein sequence ID" value="AAN37539.1"/>
    <property type="molecule type" value="Genomic_DNA"/>
</dbReference>
<dbReference type="RefSeq" id="NP_783657.1">
    <property type="nucleotide sequence ID" value="NC_004564.1"/>
</dbReference>
<dbReference type="SMR" id="P0C2N1"/>
<dbReference type="MEROPS" id="C58.001"/>
<dbReference type="KEGG" id="yew:CH47_4220"/>
<dbReference type="GO" id="GO:0005576">
    <property type="term" value="C:extracellular region"/>
    <property type="evidence" value="ECO:0007669"/>
    <property type="project" value="UniProtKB-SubCell"/>
</dbReference>
<dbReference type="GO" id="GO:0004197">
    <property type="term" value="F:cysteine-type endopeptidase activity"/>
    <property type="evidence" value="ECO:0007669"/>
    <property type="project" value="InterPro"/>
</dbReference>
<dbReference type="GO" id="GO:0006508">
    <property type="term" value="P:proteolysis"/>
    <property type="evidence" value="ECO:0007669"/>
    <property type="project" value="UniProtKB-KW"/>
</dbReference>
<dbReference type="CDD" id="cd20498">
    <property type="entry name" value="C58_YopT"/>
    <property type="match status" value="1"/>
</dbReference>
<dbReference type="Gene3D" id="3.90.70.20">
    <property type="match status" value="1"/>
</dbReference>
<dbReference type="InterPro" id="IPR038765">
    <property type="entry name" value="Papain-like_cys_pep_sf"/>
</dbReference>
<dbReference type="InterPro" id="IPR003951">
    <property type="entry name" value="Peptidase_C58"/>
</dbReference>
<dbReference type="InterPro" id="IPR006473">
    <property type="entry name" value="Peptidase_C58_Yopt"/>
</dbReference>
<dbReference type="NCBIfam" id="TIGR01586">
    <property type="entry name" value="yopT_cys_prot"/>
    <property type="match status" value="1"/>
</dbReference>
<dbReference type="Pfam" id="PF03543">
    <property type="entry name" value="Peptidase_C58"/>
    <property type="match status" value="1"/>
</dbReference>
<dbReference type="PRINTS" id="PR01376">
    <property type="entry name" value="BACSURFANTGN"/>
</dbReference>
<dbReference type="SUPFAM" id="SSF54001">
    <property type="entry name" value="Cysteine proteinases"/>
    <property type="match status" value="1"/>
</dbReference>
<geneLocation type="plasmid">
    <name>pYVa127/90</name>
</geneLocation>
<accession>P0C2N1</accession>
<accession>Q84GU1</accession>
<accession>Q93KV0</accession>
<proteinExistence type="inferred from homology"/>
<organism>
    <name type="scientific">Yersinia enterocolitica</name>
    <dbReference type="NCBI Taxonomy" id="630"/>
    <lineage>
        <taxon>Bacteria</taxon>
        <taxon>Pseudomonadati</taxon>
        <taxon>Pseudomonadota</taxon>
        <taxon>Gammaproteobacteria</taxon>
        <taxon>Enterobacterales</taxon>
        <taxon>Yersiniaceae</taxon>
        <taxon>Yersinia</taxon>
    </lineage>
</organism>
<feature type="chain" id="PRO_0000192512" description="Cysteine protease yopT1">
    <location>
        <begin position="1"/>
        <end position="322"/>
    </location>
</feature>
<feature type="active site" evidence="1">
    <location>
        <position position="139"/>
    </location>
</feature>
<feature type="active site" evidence="1">
    <location>
        <position position="258"/>
    </location>
</feature>
<feature type="active site" evidence="1">
    <location>
        <position position="274"/>
    </location>
</feature>
<protein>
    <recommendedName>
        <fullName>Cysteine protease yopT1</fullName>
        <ecNumber>3.4.22.-</ecNumber>
    </recommendedName>
</protein>
<comment type="function">
    <text evidence="2 3">Cysteine protease, which is translocated into infected cells and plays a central role in pathogenesis by cleaving the C-terminus end of the human small GTPase RhoA/ARHA, a regulator of cytoskeleton. Once cleaved, ARHA loses its lipid modification, and is released from the cell membrane, leading to the subsequent disruption of actin cytoskeleton of the host cell.</text>
</comment>
<comment type="subunit">
    <text>Interacts with human ARHA.</text>
</comment>
<comment type="subcellular location">
    <subcellularLocation>
        <location evidence="3">Secreted</location>
    </subcellularLocation>
    <text>In infected cells, it is cytoplasmic. Translocated into the host cell by the type III secretion apparatus with the help of the SycT chaperone.</text>
</comment>
<comment type="similarity">
    <text evidence="4">Belongs to the peptidase C58 family.</text>
</comment>
<reference key="1">
    <citation type="journal article" date="2003" name="Res. Microbiol.">
        <title>DNA sequence and analysis of the pYVa127/90 virulence plasmid of Yersinia enterocolitica strain A127/90.</title>
        <authorList>
            <person name="Foultier B."/>
            <person name="Cornelis G.R."/>
        </authorList>
    </citation>
    <scope>NUCLEOTIDE SEQUENCE [GENOMIC DNA]</scope>
    <source>
        <strain>A127/90 / Serotype O:8 / Biotype 1B</strain>
        <plasmid>pYVa127/90</plasmid>
    </source>
</reference>
<reference key="2">
    <citation type="journal article" date="1999" name="J. Biol. Chem.">
        <title>The cytotoxin YopT of Yersinia enterocolitica induces modification and cellular redistribution of the small GTP-binding protein RhoA.</title>
        <authorList>
            <person name="Zumbihl R."/>
            <person name="Aepfelbacher M."/>
            <person name="Andor A."/>
            <person name="Jacobi C.A."/>
            <person name="Ruckdeschel K."/>
            <person name="Rouot B."/>
            <person name="Heesemann J."/>
        </authorList>
    </citation>
    <scope>FUNCTION</scope>
    <source>
        <strain>Serotype O:8</strain>
    </source>
</reference>
<reference key="3">
    <citation type="journal article" date="2001" name="Infect. Immun.">
        <title>Recombinant Yersinia YopT leads to uncoupling of RhoA-effector interaction.</title>
        <authorList>
            <person name="Sorg I."/>
            <person name="Goehring U.M."/>
            <person name="Aktories K."/>
            <person name="Schmidt G."/>
        </authorList>
    </citation>
    <scope>FUNCTION</scope>
    <scope>SUBCELLULAR LOCATION</scope>
    <source>
        <strain>JB580v / Serotype O:8</strain>
    </source>
</reference>